<sequence length="704" mass="79881">MNSSSIQRKILVTSALPYANGPIHLGHVLEGIQTDIWVRFQKAIGNECYFFCADDTHGTPVMLAARKEKITPEQLIERVGQEHYTDLTSFGINYDNYDSTHSKANQEISKDIYLKLKEKGHISKRSIEQAYCEKDRMFLPDRFIKGTCPNCNSKNQYGDNCEVCGATYNPKDLIDSHCTLCGTPPVVKNSDHIFFKLGNFHKKTEQSNVDFDLQSWIETSEAVSESEGVKKKLKEWFDAGLQDWDISRDGPYFGFEIPSEKNKYFYVWLDAPVGYMASSKNFFEKNFPNEPNKFDSFWKDKNSEIVHFIGKDILYFHTLFWPAMLEGSGYRSPSKIHVHGFIGVNGEKMSKSRGTFIKAKTFAKFLDAEHLRFYLAAKLGPGMDDIDLSFDDFVNKVNADLVGNLINSVSRVSTTILDTLDRTLGTVSEEGLALLEEILTQPVKTGTRDDSIQNIIKTAYEQRNYAKVMREITRLGDRVNRYVNDNAPWKLIKENPEKAREIVTAVLNASRFLAIYLYPVVPKISEQIYKLLNLKGSPEFKDLDKSRILEKTKINPYEMITKRVDEKAIKVMLEENKQSEHPKKEEIPKSSNKEEGIEISIEELSKVELRVGEIVEAKPVEGADKLVNVKVDLGELGIKNVFAGIKIAYQPENLKGLKVVVVANLKPRKMKFGISEAMLLASGEGESLSLFVPHKDAKPGDRLK</sequence>
<evidence type="ECO:0000255" key="1">
    <source>
        <dbReference type="HAMAP-Rule" id="MF_00098"/>
    </source>
</evidence>
<keyword id="KW-0030">Aminoacyl-tRNA synthetase</keyword>
<keyword id="KW-0067">ATP-binding</keyword>
<keyword id="KW-0963">Cytoplasm</keyword>
<keyword id="KW-0436">Ligase</keyword>
<keyword id="KW-0479">Metal-binding</keyword>
<keyword id="KW-0547">Nucleotide-binding</keyword>
<keyword id="KW-0648">Protein biosynthesis</keyword>
<keyword id="KW-0694">RNA-binding</keyword>
<keyword id="KW-0820">tRNA-binding</keyword>
<keyword id="KW-0862">Zinc</keyword>
<accession>Q04Q66</accession>
<organism>
    <name type="scientific">Leptospira borgpetersenii serovar Hardjo-bovis (strain JB197)</name>
    <dbReference type="NCBI Taxonomy" id="355277"/>
    <lineage>
        <taxon>Bacteria</taxon>
        <taxon>Pseudomonadati</taxon>
        <taxon>Spirochaetota</taxon>
        <taxon>Spirochaetia</taxon>
        <taxon>Leptospirales</taxon>
        <taxon>Leptospiraceae</taxon>
        <taxon>Leptospira</taxon>
    </lineage>
</organism>
<dbReference type="EC" id="6.1.1.10" evidence="1"/>
<dbReference type="EMBL" id="CP000350">
    <property type="protein sequence ID" value="ABJ76954.1"/>
    <property type="molecule type" value="Genomic_DNA"/>
</dbReference>
<dbReference type="RefSeq" id="WP_011669526.1">
    <property type="nucleotide sequence ID" value="NC_008510.1"/>
</dbReference>
<dbReference type="SMR" id="Q04Q66"/>
<dbReference type="KEGG" id="lbj:LBJ_2519"/>
<dbReference type="HOGENOM" id="CLU_009710_7_0_12"/>
<dbReference type="Proteomes" id="UP000000656">
    <property type="component" value="Chromosome 1"/>
</dbReference>
<dbReference type="GO" id="GO:0005829">
    <property type="term" value="C:cytosol"/>
    <property type="evidence" value="ECO:0007669"/>
    <property type="project" value="TreeGrafter"/>
</dbReference>
<dbReference type="GO" id="GO:0005524">
    <property type="term" value="F:ATP binding"/>
    <property type="evidence" value="ECO:0007669"/>
    <property type="project" value="UniProtKB-UniRule"/>
</dbReference>
<dbReference type="GO" id="GO:0046872">
    <property type="term" value="F:metal ion binding"/>
    <property type="evidence" value="ECO:0007669"/>
    <property type="project" value="UniProtKB-KW"/>
</dbReference>
<dbReference type="GO" id="GO:0004825">
    <property type="term" value="F:methionine-tRNA ligase activity"/>
    <property type="evidence" value="ECO:0007669"/>
    <property type="project" value="UniProtKB-UniRule"/>
</dbReference>
<dbReference type="GO" id="GO:0000049">
    <property type="term" value="F:tRNA binding"/>
    <property type="evidence" value="ECO:0007669"/>
    <property type="project" value="UniProtKB-KW"/>
</dbReference>
<dbReference type="GO" id="GO:0006431">
    <property type="term" value="P:methionyl-tRNA aminoacylation"/>
    <property type="evidence" value="ECO:0007669"/>
    <property type="project" value="UniProtKB-UniRule"/>
</dbReference>
<dbReference type="CDD" id="cd07957">
    <property type="entry name" value="Anticodon_Ia_Met"/>
    <property type="match status" value="1"/>
</dbReference>
<dbReference type="CDD" id="cd00814">
    <property type="entry name" value="MetRS_core"/>
    <property type="match status" value="1"/>
</dbReference>
<dbReference type="CDD" id="cd02800">
    <property type="entry name" value="tRNA_bind_EcMetRS_like"/>
    <property type="match status" value="1"/>
</dbReference>
<dbReference type="FunFam" id="2.20.28.20:FF:000001">
    <property type="entry name" value="Methionine--tRNA ligase"/>
    <property type="match status" value="1"/>
</dbReference>
<dbReference type="FunFam" id="2.40.50.140:FF:000042">
    <property type="entry name" value="Methionine--tRNA ligase"/>
    <property type="match status" value="1"/>
</dbReference>
<dbReference type="Gene3D" id="3.40.50.620">
    <property type="entry name" value="HUPs"/>
    <property type="match status" value="1"/>
</dbReference>
<dbReference type="Gene3D" id="1.10.730.10">
    <property type="entry name" value="Isoleucyl-tRNA Synthetase, Domain 1"/>
    <property type="match status" value="1"/>
</dbReference>
<dbReference type="Gene3D" id="2.20.28.20">
    <property type="entry name" value="Methionyl-tRNA synthetase, Zn-domain"/>
    <property type="match status" value="1"/>
</dbReference>
<dbReference type="Gene3D" id="2.40.50.140">
    <property type="entry name" value="Nucleic acid-binding proteins"/>
    <property type="match status" value="1"/>
</dbReference>
<dbReference type="HAMAP" id="MF_00098">
    <property type="entry name" value="Met_tRNA_synth_type1"/>
    <property type="match status" value="1"/>
</dbReference>
<dbReference type="InterPro" id="IPR001412">
    <property type="entry name" value="aa-tRNA-synth_I_CS"/>
</dbReference>
<dbReference type="InterPro" id="IPR041872">
    <property type="entry name" value="Anticodon_Met"/>
</dbReference>
<dbReference type="InterPro" id="IPR004495">
    <property type="entry name" value="Met-tRNA-synth_bsu_C"/>
</dbReference>
<dbReference type="InterPro" id="IPR023458">
    <property type="entry name" value="Met-tRNA_ligase_1"/>
</dbReference>
<dbReference type="InterPro" id="IPR014758">
    <property type="entry name" value="Met-tRNA_synth"/>
</dbReference>
<dbReference type="InterPro" id="IPR015413">
    <property type="entry name" value="Methionyl/Leucyl_tRNA_Synth"/>
</dbReference>
<dbReference type="InterPro" id="IPR033911">
    <property type="entry name" value="MetRS_core"/>
</dbReference>
<dbReference type="InterPro" id="IPR029038">
    <property type="entry name" value="MetRS_Zn"/>
</dbReference>
<dbReference type="InterPro" id="IPR012340">
    <property type="entry name" value="NA-bd_OB-fold"/>
</dbReference>
<dbReference type="InterPro" id="IPR014729">
    <property type="entry name" value="Rossmann-like_a/b/a_fold"/>
</dbReference>
<dbReference type="InterPro" id="IPR002547">
    <property type="entry name" value="tRNA-bd_dom"/>
</dbReference>
<dbReference type="InterPro" id="IPR009080">
    <property type="entry name" value="tRNAsynth_Ia_anticodon-bd"/>
</dbReference>
<dbReference type="NCBIfam" id="TIGR00398">
    <property type="entry name" value="metG"/>
    <property type="match status" value="1"/>
</dbReference>
<dbReference type="NCBIfam" id="NF001100">
    <property type="entry name" value="PRK00133.1"/>
    <property type="match status" value="1"/>
</dbReference>
<dbReference type="PANTHER" id="PTHR45765">
    <property type="entry name" value="METHIONINE--TRNA LIGASE"/>
    <property type="match status" value="1"/>
</dbReference>
<dbReference type="PANTHER" id="PTHR45765:SF1">
    <property type="entry name" value="METHIONINE--TRNA LIGASE, CYTOPLASMIC"/>
    <property type="match status" value="1"/>
</dbReference>
<dbReference type="Pfam" id="PF19303">
    <property type="entry name" value="Anticodon_3"/>
    <property type="match status" value="1"/>
</dbReference>
<dbReference type="Pfam" id="PF09334">
    <property type="entry name" value="tRNA-synt_1g"/>
    <property type="match status" value="1"/>
</dbReference>
<dbReference type="Pfam" id="PF01588">
    <property type="entry name" value="tRNA_bind"/>
    <property type="match status" value="1"/>
</dbReference>
<dbReference type="PRINTS" id="PR01041">
    <property type="entry name" value="TRNASYNTHMET"/>
</dbReference>
<dbReference type="SUPFAM" id="SSF47323">
    <property type="entry name" value="Anticodon-binding domain of a subclass of class I aminoacyl-tRNA synthetases"/>
    <property type="match status" value="1"/>
</dbReference>
<dbReference type="SUPFAM" id="SSF57770">
    <property type="entry name" value="Methionyl-tRNA synthetase (MetRS), Zn-domain"/>
    <property type="match status" value="1"/>
</dbReference>
<dbReference type="SUPFAM" id="SSF50249">
    <property type="entry name" value="Nucleic acid-binding proteins"/>
    <property type="match status" value="1"/>
</dbReference>
<dbReference type="SUPFAM" id="SSF52374">
    <property type="entry name" value="Nucleotidylyl transferase"/>
    <property type="match status" value="1"/>
</dbReference>
<dbReference type="PROSITE" id="PS00178">
    <property type="entry name" value="AA_TRNA_LIGASE_I"/>
    <property type="match status" value="1"/>
</dbReference>
<dbReference type="PROSITE" id="PS50886">
    <property type="entry name" value="TRBD"/>
    <property type="match status" value="1"/>
</dbReference>
<name>SYM_LEPBJ</name>
<reference key="1">
    <citation type="journal article" date="2006" name="Proc. Natl. Acad. Sci. U.S.A.">
        <title>Genome reduction in Leptospira borgpetersenii reflects limited transmission potential.</title>
        <authorList>
            <person name="Bulach D.M."/>
            <person name="Zuerner R.L."/>
            <person name="Wilson P."/>
            <person name="Seemann T."/>
            <person name="McGrath A."/>
            <person name="Cullen P.A."/>
            <person name="Davis J."/>
            <person name="Johnson M."/>
            <person name="Kuczek E."/>
            <person name="Alt D.P."/>
            <person name="Peterson-Burch B."/>
            <person name="Coppel R.L."/>
            <person name="Rood J.I."/>
            <person name="Davies J.K."/>
            <person name="Adler B."/>
        </authorList>
    </citation>
    <scope>NUCLEOTIDE SEQUENCE [LARGE SCALE GENOMIC DNA]</scope>
    <source>
        <strain>JB197</strain>
    </source>
</reference>
<proteinExistence type="inferred from homology"/>
<feature type="chain" id="PRO_0000331845" description="Methionine--tRNA ligase">
    <location>
        <begin position="1"/>
        <end position="704"/>
    </location>
</feature>
<feature type="domain" description="tRNA-binding" evidence="1">
    <location>
        <begin position="603"/>
        <end position="704"/>
    </location>
</feature>
<feature type="short sequence motif" description="'HIGH' region">
    <location>
        <begin position="17"/>
        <end position="27"/>
    </location>
</feature>
<feature type="short sequence motif" description="'KMSKS' region">
    <location>
        <begin position="348"/>
        <end position="352"/>
    </location>
</feature>
<feature type="binding site" evidence="1">
    <location>
        <position position="148"/>
    </location>
    <ligand>
        <name>Zn(2+)</name>
        <dbReference type="ChEBI" id="CHEBI:29105"/>
    </ligand>
</feature>
<feature type="binding site" evidence="1">
    <location>
        <position position="151"/>
    </location>
    <ligand>
        <name>Zn(2+)</name>
        <dbReference type="ChEBI" id="CHEBI:29105"/>
    </ligand>
</feature>
<feature type="binding site" evidence="1">
    <location>
        <position position="161"/>
    </location>
    <ligand>
        <name>Zn(2+)</name>
        <dbReference type="ChEBI" id="CHEBI:29105"/>
    </ligand>
</feature>
<feature type="binding site" evidence="1">
    <location>
        <position position="164"/>
    </location>
    <ligand>
        <name>Zn(2+)</name>
        <dbReference type="ChEBI" id="CHEBI:29105"/>
    </ligand>
</feature>
<feature type="binding site" evidence="1">
    <location>
        <position position="351"/>
    </location>
    <ligand>
        <name>ATP</name>
        <dbReference type="ChEBI" id="CHEBI:30616"/>
    </ligand>
</feature>
<gene>
    <name evidence="1" type="primary">metG</name>
    <name type="ordered locus">LBJ_2519</name>
</gene>
<comment type="function">
    <text evidence="1">Is required not only for elongation of protein synthesis but also for the initiation of all mRNA translation through initiator tRNA(fMet) aminoacylation.</text>
</comment>
<comment type="catalytic activity">
    <reaction evidence="1">
        <text>tRNA(Met) + L-methionine + ATP = L-methionyl-tRNA(Met) + AMP + diphosphate</text>
        <dbReference type="Rhea" id="RHEA:13481"/>
        <dbReference type="Rhea" id="RHEA-COMP:9667"/>
        <dbReference type="Rhea" id="RHEA-COMP:9698"/>
        <dbReference type="ChEBI" id="CHEBI:30616"/>
        <dbReference type="ChEBI" id="CHEBI:33019"/>
        <dbReference type="ChEBI" id="CHEBI:57844"/>
        <dbReference type="ChEBI" id="CHEBI:78442"/>
        <dbReference type="ChEBI" id="CHEBI:78530"/>
        <dbReference type="ChEBI" id="CHEBI:456215"/>
        <dbReference type="EC" id="6.1.1.10"/>
    </reaction>
</comment>
<comment type="cofactor">
    <cofactor evidence="1">
        <name>Zn(2+)</name>
        <dbReference type="ChEBI" id="CHEBI:29105"/>
    </cofactor>
    <text evidence="1">Binds 1 zinc ion per subunit.</text>
</comment>
<comment type="subunit">
    <text evidence="1">Homodimer.</text>
</comment>
<comment type="subcellular location">
    <subcellularLocation>
        <location evidence="1">Cytoplasm</location>
    </subcellularLocation>
</comment>
<comment type="similarity">
    <text evidence="1">Belongs to the class-I aminoacyl-tRNA synthetase family. MetG type 1 subfamily.</text>
</comment>
<protein>
    <recommendedName>
        <fullName evidence="1">Methionine--tRNA ligase</fullName>
        <ecNumber evidence="1">6.1.1.10</ecNumber>
    </recommendedName>
    <alternativeName>
        <fullName evidence="1">Methionyl-tRNA synthetase</fullName>
        <shortName evidence="1">MetRS</shortName>
    </alternativeName>
</protein>